<feature type="chain" id="PRO_1000141498" description="Large ribosomal subunit protein uL2">
    <location>
        <begin position="1"/>
        <end position="274"/>
    </location>
</feature>
<feature type="region of interest" description="Disordered" evidence="2">
    <location>
        <begin position="223"/>
        <end position="274"/>
    </location>
</feature>
<comment type="function">
    <text evidence="1">One of the primary rRNA binding proteins. Required for association of the 30S and 50S subunits to form the 70S ribosome, for tRNA binding and peptide bond formation. It has been suggested to have peptidyltransferase activity; this is somewhat controversial. Makes several contacts with the 16S rRNA in the 70S ribosome.</text>
</comment>
<comment type="subunit">
    <text evidence="1">Part of the 50S ribosomal subunit. Forms a bridge to the 30S subunit in the 70S ribosome.</text>
</comment>
<comment type="similarity">
    <text evidence="1">Belongs to the universal ribosomal protein uL2 family.</text>
</comment>
<reference key="1">
    <citation type="journal article" date="2008" name="BMC Genomics">
        <title>The genome sequence of the fish pathogen Aliivibrio salmonicida strain LFI1238 shows extensive evidence of gene decay.</title>
        <authorList>
            <person name="Hjerde E."/>
            <person name="Lorentzen M.S."/>
            <person name="Holden M.T."/>
            <person name="Seeger K."/>
            <person name="Paulsen S."/>
            <person name="Bason N."/>
            <person name="Churcher C."/>
            <person name="Harris D."/>
            <person name="Norbertczak H."/>
            <person name="Quail M.A."/>
            <person name="Sanders S."/>
            <person name="Thurston S."/>
            <person name="Parkhill J."/>
            <person name="Willassen N.P."/>
            <person name="Thomson N.R."/>
        </authorList>
    </citation>
    <scope>NUCLEOTIDE SEQUENCE [LARGE SCALE GENOMIC DNA]</scope>
    <source>
        <strain>LFI1238</strain>
    </source>
</reference>
<accession>B6EPS8</accession>
<dbReference type="EMBL" id="FM178379">
    <property type="protein sequence ID" value="CAQ78008.1"/>
    <property type="molecule type" value="Genomic_DNA"/>
</dbReference>
<dbReference type="RefSeq" id="WP_012549153.1">
    <property type="nucleotide sequence ID" value="NC_011312.1"/>
</dbReference>
<dbReference type="SMR" id="B6EPS8"/>
<dbReference type="GeneID" id="56276452"/>
<dbReference type="KEGG" id="vsa:VSAL_I0323"/>
<dbReference type="eggNOG" id="COG0090">
    <property type="taxonomic scope" value="Bacteria"/>
</dbReference>
<dbReference type="HOGENOM" id="CLU_036235_2_1_6"/>
<dbReference type="Proteomes" id="UP000001730">
    <property type="component" value="Chromosome 1"/>
</dbReference>
<dbReference type="GO" id="GO:0015934">
    <property type="term" value="C:large ribosomal subunit"/>
    <property type="evidence" value="ECO:0007669"/>
    <property type="project" value="InterPro"/>
</dbReference>
<dbReference type="GO" id="GO:0019843">
    <property type="term" value="F:rRNA binding"/>
    <property type="evidence" value="ECO:0007669"/>
    <property type="project" value="UniProtKB-UniRule"/>
</dbReference>
<dbReference type="GO" id="GO:0003735">
    <property type="term" value="F:structural constituent of ribosome"/>
    <property type="evidence" value="ECO:0007669"/>
    <property type="project" value="InterPro"/>
</dbReference>
<dbReference type="GO" id="GO:0016740">
    <property type="term" value="F:transferase activity"/>
    <property type="evidence" value="ECO:0007669"/>
    <property type="project" value="InterPro"/>
</dbReference>
<dbReference type="GO" id="GO:0002181">
    <property type="term" value="P:cytoplasmic translation"/>
    <property type="evidence" value="ECO:0007669"/>
    <property type="project" value="TreeGrafter"/>
</dbReference>
<dbReference type="FunFam" id="2.30.30.30:FF:000001">
    <property type="entry name" value="50S ribosomal protein L2"/>
    <property type="match status" value="1"/>
</dbReference>
<dbReference type="FunFam" id="2.40.50.140:FF:000003">
    <property type="entry name" value="50S ribosomal protein L2"/>
    <property type="match status" value="1"/>
</dbReference>
<dbReference type="FunFam" id="4.10.950.10:FF:000001">
    <property type="entry name" value="50S ribosomal protein L2"/>
    <property type="match status" value="1"/>
</dbReference>
<dbReference type="Gene3D" id="2.30.30.30">
    <property type="match status" value="1"/>
</dbReference>
<dbReference type="Gene3D" id="2.40.50.140">
    <property type="entry name" value="Nucleic acid-binding proteins"/>
    <property type="match status" value="1"/>
</dbReference>
<dbReference type="Gene3D" id="4.10.950.10">
    <property type="entry name" value="Ribosomal protein L2, domain 3"/>
    <property type="match status" value="1"/>
</dbReference>
<dbReference type="HAMAP" id="MF_01320_B">
    <property type="entry name" value="Ribosomal_uL2_B"/>
    <property type="match status" value="1"/>
</dbReference>
<dbReference type="InterPro" id="IPR012340">
    <property type="entry name" value="NA-bd_OB-fold"/>
</dbReference>
<dbReference type="InterPro" id="IPR014722">
    <property type="entry name" value="Rib_uL2_dom2"/>
</dbReference>
<dbReference type="InterPro" id="IPR002171">
    <property type="entry name" value="Ribosomal_uL2"/>
</dbReference>
<dbReference type="InterPro" id="IPR005880">
    <property type="entry name" value="Ribosomal_uL2_bac/org-type"/>
</dbReference>
<dbReference type="InterPro" id="IPR022669">
    <property type="entry name" value="Ribosomal_uL2_C"/>
</dbReference>
<dbReference type="InterPro" id="IPR022671">
    <property type="entry name" value="Ribosomal_uL2_CS"/>
</dbReference>
<dbReference type="InterPro" id="IPR014726">
    <property type="entry name" value="Ribosomal_uL2_dom3"/>
</dbReference>
<dbReference type="InterPro" id="IPR022666">
    <property type="entry name" value="Ribosomal_uL2_RNA-bd_dom"/>
</dbReference>
<dbReference type="InterPro" id="IPR008991">
    <property type="entry name" value="Translation_prot_SH3-like_sf"/>
</dbReference>
<dbReference type="NCBIfam" id="TIGR01171">
    <property type="entry name" value="rplB_bact"/>
    <property type="match status" value="1"/>
</dbReference>
<dbReference type="PANTHER" id="PTHR13691:SF5">
    <property type="entry name" value="LARGE RIBOSOMAL SUBUNIT PROTEIN UL2M"/>
    <property type="match status" value="1"/>
</dbReference>
<dbReference type="PANTHER" id="PTHR13691">
    <property type="entry name" value="RIBOSOMAL PROTEIN L2"/>
    <property type="match status" value="1"/>
</dbReference>
<dbReference type="Pfam" id="PF00181">
    <property type="entry name" value="Ribosomal_L2"/>
    <property type="match status" value="1"/>
</dbReference>
<dbReference type="Pfam" id="PF03947">
    <property type="entry name" value="Ribosomal_L2_C"/>
    <property type="match status" value="1"/>
</dbReference>
<dbReference type="PIRSF" id="PIRSF002158">
    <property type="entry name" value="Ribosomal_L2"/>
    <property type="match status" value="1"/>
</dbReference>
<dbReference type="SMART" id="SM01383">
    <property type="entry name" value="Ribosomal_L2"/>
    <property type="match status" value="1"/>
</dbReference>
<dbReference type="SMART" id="SM01382">
    <property type="entry name" value="Ribosomal_L2_C"/>
    <property type="match status" value="1"/>
</dbReference>
<dbReference type="SUPFAM" id="SSF50249">
    <property type="entry name" value="Nucleic acid-binding proteins"/>
    <property type="match status" value="1"/>
</dbReference>
<dbReference type="SUPFAM" id="SSF50104">
    <property type="entry name" value="Translation proteins SH3-like domain"/>
    <property type="match status" value="1"/>
</dbReference>
<dbReference type="PROSITE" id="PS00467">
    <property type="entry name" value="RIBOSOMAL_L2"/>
    <property type="match status" value="1"/>
</dbReference>
<evidence type="ECO:0000255" key="1">
    <source>
        <dbReference type="HAMAP-Rule" id="MF_01320"/>
    </source>
</evidence>
<evidence type="ECO:0000256" key="2">
    <source>
        <dbReference type="SAM" id="MobiDB-lite"/>
    </source>
</evidence>
<evidence type="ECO:0000305" key="3"/>
<name>RL2_ALISL</name>
<proteinExistence type="inferred from homology"/>
<protein>
    <recommendedName>
        <fullName evidence="1">Large ribosomal subunit protein uL2</fullName>
    </recommendedName>
    <alternativeName>
        <fullName evidence="3">50S ribosomal protein L2</fullName>
    </alternativeName>
</protein>
<sequence length="274" mass="29801">MAIVKCKPTSPGRRHVVKIVNADLHKGKPYAPLLEKNSKSGGRNNNGRITVRHVGGGHKQHYRLIDFKRTKDGIPAIVERLEYDPNRSANIALVLFADGERRYIIAPKGLKAGDTVQSGVDAPIKAGNCLPLRNIPVGSTVHCVELKPGKGAQVARSAGAYAQIIARDGAYVTLRLRSGEMRKVLSEGRATIGEVGNSEHMLRELGKAGATRWRGVRPTVRGVAMNPVDHPHGGGEGRTSGGRHPVSPWGMPTKGFKTRKNKSTDKYIVRRRNK</sequence>
<organism>
    <name type="scientific">Aliivibrio salmonicida (strain LFI1238)</name>
    <name type="common">Vibrio salmonicida (strain LFI1238)</name>
    <dbReference type="NCBI Taxonomy" id="316275"/>
    <lineage>
        <taxon>Bacteria</taxon>
        <taxon>Pseudomonadati</taxon>
        <taxon>Pseudomonadota</taxon>
        <taxon>Gammaproteobacteria</taxon>
        <taxon>Vibrionales</taxon>
        <taxon>Vibrionaceae</taxon>
        <taxon>Aliivibrio</taxon>
    </lineage>
</organism>
<gene>
    <name evidence="1" type="primary">rplB</name>
    <name type="ordered locus">VSAL_I0323</name>
</gene>
<keyword id="KW-0687">Ribonucleoprotein</keyword>
<keyword id="KW-0689">Ribosomal protein</keyword>
<keyword id="KW-0694">RNA-binding</keyword>
<keyword id="KW-0699">rRNA-binding</keyword>